<keyword id="KW-0131">Cell cycle</keyword>
<keyword id="KW-0132">Cell division</keyword>
<keyword id="KW-0342">GTP-binding</keyword>
<keyword id="KW-0460">Magnesium</keyword>
<keyword id="KW-0479">Metal-binding</keyword>
<keyword id="KW-0547">Nucleotide-binding</keyword>
<keyword id="KW-0717">Septation</keyword>
<gene>
    <name evidence="1" type="primary">engB</name>
    <name type="ordered locus">RPE_0645</name>
</gene>
<reference key="1">
    <citation type="submission" date="2006-09" db="EMBL/GenBank/DDBJ databases">
        <title>Complete sequence of Rhodopseudomonas palustris BisA53.</title>
        <authorList>
            <consortium name="US DOE Joint Genome Institute"/>
            <person name="Copeland A."/>
            <person name="Lucas S."/>
            <person name="Lapidus A."/>
            <person name="Barry K."/>
            <person name="Detter J.C."/>
            <person name="Glavina del Rio T."/>
            <person name="Hammon N."/>
            <person name="Israni S."/>
            <person name="Dalin E."/>
            <person name="Tice H."/>
            <person name="Pitluck S."/>
            <person name="Chain P."/>
            <person name="Malfatti S."/>
            <person name="Shin M."/>
            <person name="Vergez L."/>
            <person name="Schmutz J."/>
            <person name="Larimer F."/>
            <person name="Land M."/>
            <person name="Hauser L."/>
            <person name="Pelletier D.A."/>
            <person name="Kyrpides N."/>
            <person name="Kim E."/>
            <person name="Harwood C.S."/>
            <person name="Oda Y."/>
            <person name="Richardson P."/>
        </authorList>
    </citation>
    <scope>NUCLEOTIDE SEQUENCE [LARGE SCALE GENOMIC DNA]</scope>
    <source>
        <strain>BisA53</strain>
    </source>
</reference>
<sequence>MTDELDPALIERARKLFAGDWQFIWASPSVETLPPMQGLEVAFAGRSNVGKSSLINALTGRNGLARTSHTPGRTQELIFFEGPADAGFRLVDMPGYGYAAAPKTKIASWTKLIHQFLQGRATLVRVYVLIDARHGIKDVDNEVLTTLDKSAVSYQIVLTKADQVKPAELAERVAATTEALRKHPAAFPEIVVTSSRNASGMPELRAAIIKLVAERS</sequence>
<comment type="function">
    <text evidence="1">Necessary for normal cell division and for the maintenance of normal septation.</text>
</comment>
<comment type="cofactor">
    <cofactor evidence="1">
        <name>Mg(2+)</name>
        <dbReference type="ChEBI" id="CHEBI:18420"/>
    </cofactor>
</comment>
<comment type="similarity">
    <text evidence="1">Belongs to the TRAFAC class TrmE-Era-EngA-EngB-Septin-like GTPase superfamily. EngB GTPase family.</text>
</comment>
<organism>
    <name type="scientific">Rhodopseudomonas palustris (strain BisA53)</name>
    <dbReference type="NCBI Taxonomy" id="316055"/>
    <lineage>
        <taxon>Bacteria</taxon>
        <taxon>Pseudomonadati</taxon>
        <taxon>Pseudomonadota</taxon>
        <taxon>Alphaproteobacteria</taxon>
        <taxon>Hyphomicrobiales</taxon>
        <taxon>Nitrobacteraceae</taxon>
        <taxon>Rhodopseudomonas</taxon>
    </lineage>
</organism>
<accession>Q07TY1</accession>
<proteinExistence type="inferred from homology"/>
<protein>
    <recommendedName>
        <fullName evidence="1">Probable GTP-binding protein EngB</fullName>
    </recommendedName>
</protein>
<evidence type="ECO:0000255" key="1">
    <source>
        <dbReference type="HAMAP-Rule" id="MF_00321"/>
    </source>
</evidence>
<dbReference type="EMBL" id="CP000463">
    <property type="protein sequence ID" value="ABJ04603.1"/>
    <property type="molecule type" value="Genomic_DNA"/>
</dbReference>
<dbReference type="SMR" id="Q07TY1"/>
<dbReference type="STRING" id="316055.RPE_0645"/>
<dbReference type="KEGG" id="rpe:RPE_0645"/>
<dbReference type="eggNOG" id="COG0218">
    <property type="taxonomic scope" value="Bacteria"/>
</dbReference>
<dbReference type="HOGENOM" id="CLU_033732_2_0_5"/>
<dbReference type="OrthoDB" id="9804921at2"/>
<dbReference type="GO" id="GO:0005829">
    <property type="term" value="C:cytosol"/>
    <property type="evidence" value="ECO:0007669"/>
    <property type="project" value="TreeGrafter"/>
</dbReference>
<dbReference type="GO" id="GO:0005525">
    <property type="term" value="F:GTP binding"/>
    <property type="evidence" value="ECO:0007669"/>
    <property type="project" value="UniProtKB-UniRule"/>
</dbReference>
<dbReference type="GO" id="GO:0046872">
    <property type="term" value="F:metal ion binding"/>
    <property type="evidence" value="ECO:0007669"/>
    <property type="project" value="UniProtKB-KW"/>
</dbReference>
<dbReference type="GO" id="GO:0000917">
    <property type="term" value="P:division septum assembly"/>
    <property type="evidence" value="ECO:0007669"/>
    <property type="project" value="UniProtKB-KW"/>
</dbReference>
<dbReference type="CDD" id="cd01876">
    <property type="entry name" value="YihA_EngB"/>
    <property type="match status" value="1"/>
</dbReference>
<dbReference type="Gene3D" id="3.40.50.300">
    <property type="entry name" value="P-loop containing nucleotide triphosphate hydrolases"/>
    <property type="match status" value="1"/>
</dbReference>
<dbReference type="HAMAP" id="MF_00321">
    <property type="entry name" value="GTPase_EngB"/>
    <property type="match status" value="1"/>
</dbReference>
<dbReference type="InterPro" id="IPR030393">
    <property type="entry name" value="G_ENGB_dom"/>
</dbReference>
<dbReference type="InterPro" id="IPR006073">
    <property type="entry name" value="GTP-bd"/>
</dbReference>
<dbReference type="InterPro" id="IPR019987">
    <property type="entry name" value="GTP-bd_ribosome_bio_YsxC"/>
</dbReference>
<dbReference type="InterPro" id="IPR027417">
    <property type="entry name" value="P-loop_NTPase"/>
</dbReference>
<dbReference type="NCBIfam" id="TIGR03598">
    <property type="entry name" value="GTPase_YsxC"/>
    <property type="match status" value="1"/>
</dbReference>
<dbReference type="PANTHER" id="PTHR11649:SF13">
    <property type="entry name" value="ENGB-TYPE G DOMAIN-CONTAINING PROTEIN"/>
    <property type="match status" value="1"/>
</dbReference>
<dbReference type="PANTHER" id="PTHR11649">
    <property type="entry name" value="MSS1/TRME-RELATED GTP-BINDING PROTEIN"/>
    <property type="match status" value="1"/>
</dbReference>
<dbReference type="Pfam" id="PF01926">
    <property type="entry name" value="MMR_HSR1"/>
    <property type="match status" value="1"/>
</dbReference>
<dbReference type="SUPFAM" id="SSF52540">
    <property type="entry name" value="P-loop containing nucleoside triphosphate hydrolases"/>
    <property type="match status" value="1"/>
</dbReference>
<dbReference type="PROSITE" id="PS51706">
    <property type="entry name" value="G_ENGB"/>
    <property type="match status" value="1"/>
</dbReference>
<feature type="chain" id="PRO_1000005846" description="Probable GTP-binding protein EngB">
    <location>
        <begin position="1"/>
        <end position="216"/>
    </location>
</feature>
<feature type="domain" description="EngB-type G" evidence="1">
    <location>
        <begin position="37"/>
        <end position="214"/>
    </location>
</feature>
<feature type="binding site" evidence="1">
    <location>
        <begin position="45"/>
        <end position="52"/>
    </location>
    <ligand>
        <name>GTP</name>
        <dbReference type="ChEBI" id="CHEBI:37565"/>
    </ligand>
</feature>
<feature type="binding site" evidence="1">
    <location>
        <position position="52"/>
    </location>
    <ligand>
        <name>Mg(2+)</name>
        <dbReference type="ChEBI" id="CHEBI:18420"/>
    </ligand>
</feature>
<feature type="binding site" evidence="1">
    <location>
        <begin position="72"/>
        <end position="76"/>
    </location>
    <ligand>
        <name>GTP</name>
        <dbReference type="ChEBI" id="CHEBI:37565"/>
    </ligand>
</feature>
<feature type="binding site" evidence="1">
    <location>
        <position position="74"/>
    </location>
    <ligand>
        <name>Mg(2+)</name>
        <dbReference type="ChEBI" id="CHEBI:18420"/>
    </ligand>
</feature>
<feature type="binding site" evidence="1">
    <location>
        <begin position="92"/>
        <end position="95"/>
    </location>
    <ligand>
        <name>GTP</name>
        <dbReference type="ChEBI" id="CHEBI:37565"/>
    </ligand>
</feature>
<feature type="binding site" evidence="1">
    <location>
        <begin position="159"/>
        <end position="162"/>
    </location>
    <ligand>
        <name>GTP</name>
        <dbReference type="ChEBI" id="CHEBI:37565"/>
    </ligand>
</feature>
<feature type="binding site" evidence="1">
    <location>
        <begin position="193"/>
        <end position="195"/>
    </location>
    <ligand>
        <name>GTP</name>
        <dbReference type="ChEBI" id="CHEBI:37565"/>
    </ligand>
</feature>
<name>ENGB_RHOP5</name>